<dbReference type="EC" id="2.7.6.1" evidence="1"/>
<dbReference type="EMBL" id="BA000030">
    <property type="protein sequence ID" value="BAC71274.1"/>
    <property type="molecule type" value="Genomic_DNA"/>
</dbReference>
<dbReference type="RefSeq" id="WP_010984993.1">
    <property type="nucleotide sequence ID" value="NZ_JZJK01000090.1"/>
</dbReference>
<dbReference type="SMR" id="Q82HE7"/>
<dbReference type="GeneID" id="41540627"/>
<dbReference type="KEGG" id="sma:SAVERM_3562"/>
<dbReference type="eggNOG" id="COG0462">
    <property type="taxonomic scope" value="Bacteria"/>
</dbReference>
<dbReference type="HOGENOM" id="CLU_033546_2_0_11"/>
<dbReference type="OrthoDB" id="9777067at2"/>
<dbReference type="UniPathway" id="UPA00087">
    <property type="reaction ID" value="UER00172"/>
</dbReference>
<dbReference type="Proteomes" id="UP000000428">
    <property type="component" value="Chromosome"/>
</dbReference>
<dbReference type="GO" id="GO:0005737">
    <property type="term" value="C:cytoplasm"/>
    <property type="evidence" value="ECO:0007669"/>
    <property type="project" value="UniProtKB-SubCell"/>
</dbReference>
<dbReference type="GO" id="GO:0002189">
    <property type="term" value="C:ribose phosphate diphosphokinase complex"/>
    <property type="evidence" value="ECO:0007669"/>
    <property type="project" value="TreeGrafter"/>
</dbReference>
<dbReference type="GO" id="GO:0005524">
    <property type="term" value="F:ATP binding"/>
    <property type="evidence" value="ECO:0007669"/>
    <property type="project" value="UniProtKB-KW"/>
</dbReference>
<dbReference type="GO" id="GO:0016301">
    <property type="term" value="F:kinase activity"/>
    <property type="evidence" value="ECO:0007669"/>
    <property type="project" value="UniProtKB-KW"/>
</dbReference>
<dbReference type="GO" id="GO:0000287">
    <property type="term" value="F:magnesium ion binding"/>
    <property type="evidence" value="ECO:0007669"/>
    <property type="project" value="UniProtKB-UniRule"/>
</dbReference>
<dbReference type="GO" id="GO:0004749">
    <property type="term" value="F:ribose phosphate diphosphokinase activity"/>
    <property type="evidence" value="ECO:0007669"/>
    <property type="project" value="UniProtKB-UniRule"/>
</dbReference>
<dbReference type="GO" id="GO:0006015">
    <property type="term" value="P:5-phosphoribose 1-diphosphate biosynthetic process"/>
    <property type="evidence" value="ECO:0007669"/>
    <property type="project" value="UniProtKB-UniRule"/>
</dbReference>
<dbReference type="GO" id="GO:0006164">
    <property type="term" value="P:purine nucleotide biosynthetic process"/>
    <property type="evidence" value="ECO:0007669"/>
    <property type="project" value="TreeGrafter"/>
</dbReference>
<dbReference type="GO" id="GO:0009156">
    <property type="term" value="P:ribonucleoside monophosphate biosynthetic process"/>
    <property type="evidence" value="ECO:0007669"/>
    <property type="project" value="InterPro"/>
</dbReference>
<dbReference type="CDD" id="cd06223">
    <property type="entry name" value="PRTases_typeI"/>
    <property type="match status" value="1"/>
</dbReference>
<dbReference type="FunFam" id="3.40.50.2020:FF:000002">
    <property type="entry name" value="Ribose-phosphate pyrophosphokinase"/>
    <property type="match status" value="1"/>
</dbReference>
<dbReference type="FunFam" id="3.40.50.2020:FF:000014">
    <property type="entry name" value="Ribose-phosphate pyrophosphokinase 1"/>
    <property type="match status" value="1"/>
</dbReference>
<dbReference type="Gene3D" id="3.40.50.2020">
    <property type="match status" value="2"/>
</dbReference>
<dbReference type="HAMAP" id="MF_00583_B">
    <property type="entry name" value="RibP_PPkinase_B"/>
    <property type="match status" value="1"/>
</dbReference>
<dbReference type="InterPro" id="IPR000842">
    <property type="entry name" value="PRib_PP_synth_CS"/>
</dbReference>
<dbReference type="InterPro" id="IPR029099">
    <property type="entry name" value="Pribosyltran_N"/>
</dbReference>
<dbReference type="InterPro" id="IPR000836">
    <property type="entry name" value="PRibTrfase_dom"/>
</dbReference>
<dbReference type="InterPro" id="IPR029057">
    <property type="entry name" value="PRTase-like"/>
</dbReference>
<dbReference type="InterPro" id="IPR005946">
    <property type="entry name" value="Rib-P_diPkinase"/>
</dbReference>
<dbReference type="InterPro" id="IPR037515">
    <property type="entry name" value="Rib-P_diPkinase_bac"/>
</dbReference>
<dbReference type="NCBIfam" id="NF002320">
    <property type="entry name" value="PRK01259.1"/>
    <property type="match status" value="1"/>
</dbReference>
<dbReference type="NCBIfam" id="NF002844">
    <property type="entry name" value="PRK03092.1"/>
    <property type="match status" value="1"/>
</dbReference>
<dbReference type="NCBIfam" id="TIGR01251">
    <property type="entry name" value="ribP_PPkin"/>
    <property type="match status" value="1"/>
</dbReference>
<dbReference type="PANTHER" id="PTHR10210">
    <property type="entry name" value="RIBOSE-PHOSPHATE DIPHOSPHOKINASE FAMILY MEMBER"/>
    <property type="match status" value="1"/>
</dbReference>
<dbReference type="PANTHER" id="PTHR10210:SF41">
    <property type="entry name" value="RIBOSE-PHOSPHATE PYROPHOSPHOKINASE 1, CHLOROPLASTIC"/>
    <property type="match status" value="1"/>
</dbReference>
<dbReference type="Pfam" id="PF14572">
    <property type="entry name" value="Pribosyl_synth"/>
    <property type="match status" value="1"/>
</dbReference>
<dbReference type="Pfam" id="PF13793">
    <property type="entry name" value="Pribosyltran_N"/>
    <property type="match status" value="1"/>
</dbReference>
<dbReference type="SMART" id="SM01400">
    <property type="entry name" value="Pribosyltran_N"/>
    <property type="match status" value="1"/>
</dbReference>
<dbReference type="SUPFAM" id="SSF53271">
    <property type="entry name" value="PRTase-like"/>
    <property type="match status" value="1"/>
</dbReference>
<dbReference type="PROSITE" id="PS00114">
    <property type="entry name" value="PRPP_SYNTHASE"/>
    <property type="match status" value="1"/>
</dbReference>
<protein>
    <recommendedName>
        <fullName evidence="1">Ribose-phosphate pyrophosphokinase</fullName>
        <shortName evidence="1">RPPK</shortName>
        <ecNumber evidence="1">2.7.6.1</ecNumber>
    </recommendedName>
    <alternativeName>
        <fullName evidence="1">5-phospho-D-ribosyl alpha-1-diphosphate synthase</fullName>
    </alternativeName>
    <alternativeName>
        <fullName evidence="1">Phosphoribosyl diphosphate synthase</fullName>
    </alternativeName>
    <alternativeName>
        <fullName evidence="1">Phosphoribosyl pyrophosphate synthase</fullName>
        <shortName evidence="1">P-Rib-PP synthase</shortName>
        <shortName evidence="1">PRPP synthase</shortName>
        <shortName evidence="1">PRPPase</shortName>
    </alternativeName>
</protein>
<reference key="1">
    <citation type="journal article" date="2001" name="Proc. Natl. Acad. Sci. U.S.A.">
        <title>Genome sequence of an industrial microorganism Streptomyces avermitilis: deducing the ability of producing secondary metabolites.</title>
        <authorList>
            <person name="Omura S."/>
            <person name="Ikeda H."/>
            <person name="Ishikawa J."/>
            <person name="Hanamoto A."/>
            <person name="Takahashi C."/>
            <person name="Shinose M."/>
            <person name="Takahashi Y."/>
            <person name="Horikawa H."/>
            <person name="Nakazawa H."/>
            <person name="Osonoe T."/>
            <person name="Kikuchi H."/>
            <person name="Shiba T."/>
            <person name="Sakaki Y."/>
            <person name="Hattori M."/>
        </authorList>
    </citation>
    <scope>NUCLEOTIDE SEQUENCE [LARGE SCALE GENOMIC DNA]</scope>
    <source>
        <strain>ATCC 31267 / DSM 46492 / JCM 5070 / NBRC 14893 / NCIMB 12804 / NRRL 8165 / MA-4680</strain>
    </source>
</reference>
<reference key="2">
    <citation type="journal article" date="2003" name="Nat. Biotechnol.">
        <title>Complete genome sequence and comparative analysis of the industrial microorganism Streptomyces avermitilis.</title>
        <authorList>
            <person name="Ikeda H."/>
            <person name="Ishikawa J."/>
            <person name="Hanamoto A."/>
            <person name="Shinose M."/>
            <person name="Kikuchi H."/>
            <person name="Shiba T."/>
            <person name="Sakaki Y."/>
            <person name="Hattori M."/>
            <person name="Omura S."/>
        </authorList>
    </citation>
    <scope>NUCLEOTIDE SEQUENCE [LARGE SCALE GENOMIC DNA]</scope>
    <source>
        <strain>ATCC 31267 / DSM 46492 / JCM 5070 / NBRC 14893 / NCIMB 12804 / NRRL 8165 / MA-4680</strain>
    </source>
</reference>
<organism>
    <name type="scientific">Streptomyces avermitilis (strain ATCC 31267 / DSM 46492 / JCM 5070 / NBRC 14893 / NCIMB 12804 / NRRL 8165 / MA-4680)</name>
    <dbReference type="NCBI Taxonomy" id="227882"/>
    <lineage>
        <taxon>Bacteria</taxon>
        <taxon>Bacillati</taxon>
        <taxon>Actinomycetota</taxon>
        <taxon>Actinomycetes</taxon>
        <taxon>Kitasatosporales</taxon>
        <taxon>Streptomycetaceae</taxon>
        <taxon>Streptomyces</taxon>
    </lineage>
</organism>
<keyword id="KW-0067">ATP-binding</keyword>
<keyword id="KW-0963">Cytoplasm</keyword>
<keyword id="KW-0418">Kinase</keyword>
<keyword id="KW-0460">Magnesium</keyword>
<keyword id="KW-0479">Metal-binding</keyword>
<keyword id="KW-0545">Nucleotide biosynthesis</keyword>
<keyword id="KW-0547">Nucleotide-binding</keyword>
<keyword id="KW-1185">Reference proteome</keyword>
<keyword id="KW-0808">Transferase</keyword>
<accession>Q82HE7</accession>
<proteinExistence type="inferred from homology"/>
<sequence length="324" mass="35338">MTGIKTTGEKKMMFFSGRAHPELAEEVAHKLGVGVVPTKAFDFANGEIYVRYQESARGADCFLIQSHTAPINKWIMEQLIMIDALKRASARSITVIVPFYGYARQDKKHRGREPISARLIADLMKTAGADRILTVDLHTDQIQGFFDGPVDHLFALPILADYVGAKVDRSKLTVVSPDAGRVRVADRWCDRLDAPLAIVHKRRDKDVANQVTVHEVVGDVKGRVCVLVDDMIDTGGTICAAADALFAHGAEDVIVTATHGVLSGPAADRLKNSKVSEFVFTDTLPTPGELELDKITVLSIAPTIANAVREVFEDGSVTSLFDEQ</sequence>
<feature type="chain" id="PRO_0000141200" description="Ribose-phosphate pyrophosphokinase">
    <location>
        <begin position="1"/>
        <end position="324"/>
    </location>
</feature>
<feature type="active site" evidence="1">
    <location>
        <position position="201"/>
    </location>
</feature>
<feature type="binding site" evidence="1">
    <location>
        <begin position="45"/>
        <end position="47"/>
    </location>
    <ligand>
        <name>ATP</name>
        <dbReference type="ChEBI" id="CHEBI:30616"/>
    </ligand>
</feature>
<feature type="binding site" evidence="1">
    <location>
        <begin position="104"/>
        <end position="105"/>
    </location>
    <ligand>
        <name>ATP</name>
        <dbReference type="ChEBI" id="CHEBI:30616"/>
    </ligand>
</feature>
<feature type="binding site" evidence="1">
    <location>
        <position position="138"/>
    </location>
    <ligand>
        <name>Mg(2+)</name>
        <dbReference type="ChEBI" id="CHEBI:18420"/>
        <label>1</label>
    </ligand>
</feature>
<feature type="binding site" evidence="1">
    <location>
        <position position="178"/>
    </location>
    <ligand>
        <name>Mg(2+)</name>
        <dbReference type="ChEBI" id="CHEBI:18420"/>
        <label>2</label>
    </ligand>
</feature>
<feature type="binding site" evidence="1">
    <location>
        <position position="203"/>
    </location>
    <ligand>
        <name>D-ribose 5-phosphate</name>
        <dbReference type="ChEBI" id="CHEBI:78346"/>
    </ligand>
</feature>
<feature type="binding site" evidence="1">
    <location>
        <position position="229"/>
    </location>
    <ligand>
        <name>D-ribose 5-phosphate</name>
        <dbReference type="ChEBI" id="CHEBI:78346"/>
    </ligand>
</feature>
<feature type="binding site" evidence="1">
    <location>
        <begin position="233"/>
        <end position="237"/>
    </location>
    <ligand>
        <name>D-ribose 5-phosphate</name>
        <dbReference type="ChEBI" id="CHEBI:78346"/>
    </ligand>
</feature>
<comment type="function">
    <text evidence="1">Involved in the biosynthesis of the central metabolite phospho-alpha-D-ribosyl-1-pyrophosphate (PRPP) via the transfer of pyrophosphoryl group from ATP to 1-hydroxyl of ribose-5-phosphate (Rib-5-P).</text>
</comment>
<comment type="catalytic activity">
    <reaction evidence="1">
        <text>D-ribose 5-phosphate + ATP = 5-phospho-alpha-D-ribose 1-diphosphate + AMP + H(+)</text>
        <dbReference type="Rhea" id="RHEA:15609"/>
        <dbReference type="ChEBI" id="CHEBI:15378"/>
        <dbReference type="ChEBI" id="CHEBI:30616"/>
        <dbReference type="ChEBI" id="CHEBI:58017"/>
        <dbReference type="ChEBI" id="CHEBI:78346"/>
        <dbReference type="ChEBI" id="CHEBI:456215"/>
        <dbReference type="EC" id="2.7.6.1"/>
    </reaction>
</comment>
<comment type="cofactor">
    <cofactor evidence="1">
        <name>Mg(2+)</name>
        <dbReference type="ChEBI" id="CHEBI:18420"/>
    </cofactor>
    <text evidence="1">Binds 2 Mg(2+) ions per subunit.</text>
</comment>
<comment type="pathway">
    <text evidence="1">Metabolic intermediate biosynthesis; 5-phospho-alpha-D-ribose 1-diphosphate biosynthesis; 5-phospho-alpha-D-ribose 1-diphosphate from D-ribose 5-phosphate (route I): step 1/1.</text>
</comment>
<comment type="subunit">
    <text evidence="1">Homohexamer.</text>
</comment>
<comment type="subcellular location">
    <subcellularLocation>
        <location evidence="1">Cytoplasm</location>
    </subcellularLocation>
</comment>
<comment type="similarity">
    <text evidence="1">Belongs to the ribose-phosphate pyrophosphokinase family. Class I subfamily.</text>
</comment>
<evidence type="ECO:0000255" key="1">
    <source>
        <dbReference type="HAMAP-Rule" id="MF_00583"/>
    </source>
</evidence>
<name>KPRS_STRAW</name>
<gene>
    <name evidence="1" type="primary">prs</name>
    <name type="synonym">prsA1</name>
    <name type="ordered locus">SAV_3562</name>
</gene>